<feature type="chain" id="PRO_0000428493" description="PGL/p-HBAD biosynthesis glycosyltransferase MT3034">
    <location>
        <begin position="1"/>
        <end position="428"/>
    </location>
</feature>
<feature type="region of interest" description="Disordered" evidence="2">
    <location>
        <begin position="1"/>
        <end position="23"/>
    </location>
</feature>
<comment type="function">
    <text evidence="1">Involved in glycosylation steps downstream of mono-O-methyl-glycosyl-p-hydroxybenzoic acid derivative (p-HBAD I) and 2-O-methyl-rhamnosyl-phenolphthiocerol dimycocerosate (mycoside B) during the p-hydroxybenzoic acid derivatives (p-HBAD) and glycosylated phenolphthiocerol dimycocerosates (PGL) biosynthesis.</text>
</comment>
<comment type="similarity">
    <text evidence="3">Belongs to the UDP-glycosyltransferase family.</text>
</comment>
<accession>P9WFR0</accession>
<accession>L0TE23</accession>
<accession>P95134</accession>
<accession>Q50458</accession>
<accession>Q7D6D1</accession>
<name>GLTR2_MYCTO</name>
<evidence type="ECO:0000250" key="1"/>
<evidence type="ECO:0000256" key="2">
    <source>
        <dbReference type="SAM" id="MobiDB-lite"/>
    </source>
</evidence>
<evidence type="ECO:0000305" key="3"/>
<dbReference type="EC" id="2.4.1.-"/>
<dbReference type="EMBL" id="AE000516">
    <property type="protein sequence ID" value="AAK47360.1"/>
    <property type="molecule type" value="Genomic_DNA"/>
</dbReference>
<dbReference type="PIR" id="C70670">
    <property type="entry name" value="C70670"/>
</dbReference>
<dbReference type="RefSeq" id="WP_003899557.1">
    <property type="nucleotide sequence ID" value="NZ_KK341227.1"/>
</dbReference>
<dbReference type="SMR" id="P9WFR0"/>
<dbReference type="CAZy" id="GT1">
    <property type="family name" value="Glycosyltransferase Family 1"/>
</dbReference>
<dbReference type="KEGG" id="mtc:MT3034"/>
<dbReference type="PATRIC" id="fig|83331.31.peg.3276"/>
<dbReference type="HOGENOM" id="CLU_692271_0_0_11"/>
<dbReference type="Proteomes" id="UP000001020">
    <property type="component" value="Chromosome"/>
</dbReference>
<dbReference type="GO" id="GO:0016758">
    <property type="term" value="F:hexosyltransferase activity"/>
    <property type="evidence" value="ECO:0007669"/>
    <property type="project" value="UniProtKB-ARBA"/>
</dbReference>
<dbReference type="GO" id="GO:0008194">
    <property type="term" value="F:UDP-glycosyltransferase activity"/>
    <property type="evidence" value="ECO:0007669"/>
    <property type="project" value="InterPro"/>
</dbReference>
<dbReference type="GO" id="GO:0009058">
    <property type="term" value="P:biosynthetic process"/>
    <property type="evidence" value="ECO:0007669"/>
    <property type="project" value="UniProtKB-ARBA"/>
</dbReference>
<dbReference type="CDD" id="cd03784">
    <property type="entry name" value="GT1_Gtf-like"/>
    <property type="match status" value="1"/>
</dbReference>
<dbReference type="FunFam" id="3.40.50.2000:FF:000072">
    <property type="entry name" value="Glycosyl transferase"/>
    <property type="match status" value="1"/>
</dbReference>
<dbReference type="Gene3D" id="3.40.50.2000">
    <property type="entry name" value="Glycogen Phosphorylase B"/>
    <property type="match status" value="2"/>
</dbReference>
<dbReference type="InterPro" id="IPR010610">
    <property type="entry name" value="EryCIII-like_C"/>
</dbReference>
<dbReference type="InterPro" id="IPR002213">
    <property type="entry name" value="UDP_glucos_trans"/>
</dbReference>
<dbReference type="PANTHER" id="PTHR21015:SF22">
    <property type="entry name" value="GLYCOSYLTRANSFERASE"/>
    <property type="match status" value="1"/>
</dbReference>
<dbReference type="PANTHER" id="PTHR21015">
    <property type="entry name" value="UDP-N-ACETYLGLUCOSAMINE--N-ACETYLMURAMYL-(PENTAPEPTIDE) PYROPHOSPHORYL-UNDECAPRENOL N-ACETYLGLUCOSAMINE TRANSFERASE 1"/>
    <property type="match status" value="1"/>
</dbReference>
<dbReference type="Pfam" id="PF06722">
    <property type="entry name" value="EryCIII-like_C"/>
    <property type="match status" value="1"/>
</dbReference>
<dbReference type="SUPFAM" id="SSF53756">
    <property type="entry name" value="UDP-Glycosyltransferase/glycogen phosphorylase"/>
    <property type="match status" value="1"/>
</dbReference>
<keyword id="KW-0328">Glycosyltransferase</keyword>
<keyword id="KW-1185">Reference proteome</keyword>
<keyword id="KW-0808">Transferase</keyword>
<reference key="1">
    <citation type="journal article" date="2002" name="J. Bacteriol.">
        <title>Whole-genome comparison of Mycobacterium tuberculosis clinical and laboratory strains.</title>
        <authorList>
            <person name="Fleischmann R.D."/>
            <person name="Alland D."/>
            <person name="Eisen J.A."/>
            <person name="Carpenter L."/>
            <person name="White O."/>
            <person name="Peterson J.D."/>
            <person name="DeBoy R.T."/>
            <person name="Dodson R.J."/>
            <person name="Gwinn M.L."/>
            <person name="Haft D.H."/>
            <person name="Hickey E.K."/>
            <person name="Kolonay J.F."/>
            <person name="Nelson W.C."/>
            <person name="Umayam L.A."/>
            <person name="Ermolaeva M.D."/>
            <person name="Salzberg S.L."/>
            <person name="Delcher A."/>
            <person name="Utterback T.R."/>
            <person name="Weidman J.F."/>
            <person name="Khouri H.M."/>
            <person name="Gill J."/>
            <person name="Mikula A."/>
            <person name="Bishai W."/>
            <person name="Jacobs W.R. Jr."/>
            <person name="Venter J.C."/>
            <person name="Fraser C.M."/>
        </authorList>
    </citation>
    <scope>NUCLEOTIDE SEQUENCE [LARGE SCALE GENOMIC DNA]</scope>
    <source>
        <strain>CDC 1551 / Oshkosh</strain>
    </source>
</reference>
<sequence>MEETSVAGDPGPDAGTSTAPNAAPEPVARRQRILFVGEAATLAHVVRPFVLARSLDPSRYEVHFACDPRFNKLLGPLPFPHHPIHTVPSEEVLLKIAQGRLFYNTRTLRKYIAADRKILNEIAPDVVVGDNRLSLSVSARLAGIPYIAIANAYWSPQARRRFPLPDVPWTRFFGVRPVSILYRLYRPLIFALYCLPLNWLRRKHGLSSLGWDLCRIFTDGDYTLYADVPELVPTYNLPANHRYLGPVLWSPDVKPPTWWHSLPTDRPIIYATLGSSGGKNLLQVVLNALADLPVTVIAATAGRNHLKNVPANAFVADYLPGEAAAARSAVVLCNGGSPTTQQALAAGVPVIGLPSNMDQHLNMEALERAGAGVLLRTERLNTEGVAAAVKQVLSGAEFRQAARRLAEAFGPDFAGFPQHIESALRLVC</sequence>
<gene>
    <name type="ordered locus">MT3034</name>
</gene>
<organism>
    <name type="scientific">Mycobacterium tuberculosis (strain CDC 1551 / Oshkosh)</name>
    <dbReference type="NCBI Taxonomy" id="83331"/>
    <lineage>
        <taxon>Bacteria</taxon>
        <taxon>Bacillati</taxon>
        <taxon>Actinomycetota</taxon>
        <taxon>Actinomycetes</taxon>
        <taxon>Mycobacteriales</taxon>
        <taxon>Mycobacteriaceae</taxon>
        <taxon>Mycobacterium</taxon>
        <taxon>Mycobacterium tuberculosis complex</taxon>
    </lineage>
</organism>
<proteinExistence type="inferred from homology"/>
<protein>
    <recommendedName>
        <fullName>PGL/p-HBAD biosynthesis glycosyltransferase MT3034</fullName>
        <ecNumber>2.4.1.-</ecNumber>
    </recommendedName>
</protein>